<protein>
    <recommendedName>
        <fullName evidence="1">Large ribosomal subunit protein uL16</fullName>
    </recommendedName>
    <alternativeName>
        <fullName evidence="3">50S ribosomal protein L16</fullName>
    </alternativeName>
</protein>
<keyword id="KW-1185">Reference proteome</keyword>
<keyword id="KW-0687">Ribonucleoprotein</keyword>
<keyword id="KW-0689">Ribosomal protein</keyword>
<keyword id="KW-0694">RNA-binding</keyword>
<keyword id="KW-0699">rRNA-binding</keyword>
<keyword id="KW-0820">tRNA-binding</keyword>
<gene>
    <name evidence="1" type="primary">rplP</name>
    <name type="ordered locus">Daci_0398</name>
</gene>
<comment type="function">
    <text evidence="1">Binds 23S rRNA and is also seen to make contacts with the A and possibly P site tRNAs.</text>
</comment>
<comment type="subunit">
    <text evidence="1">Part of the 50S ribosomal subunit.</text>
</comment>
<comment type="similarity">
    <text evidence="1">Belongs to the universal ribosomal protein uL16 family.</text>
</comment>
<feature type="chain" id="PRO_1000142958" description="Large ribosomal subunit protein uL16">
    <location>
        <begin position="1"/>
        <end position="138"/>
    </location>
</feature>
<feature type="region of interest" description="Disordered" evidence="2">
    <location>
        <begin position="1"/>
        <end position="22"/>
    </location>
</feature>
<feature type="compositionally biased region" description="Basic residues" evidence="2">
    <location>
        <begin position="1"/>
        <end position="13"/>
    </location>
</feature>
<sequence length="138" mass="15447">MLQPARRKYRKEQKGRNTGIATRGNSVAFGDFGLKSTDRGRLTARQIEAARRAISRHVKRGGRIWIRVFPDKPISTKPAEVRMGNGKGNPEYYVAEIQPGKVLYEIVGVPEELAREAFRLAAAKLPLRTTFVSRQIGA</sequence>
<proteinExistence type="inferred from homology"/>
<name>RL16_DELAS</name>
<reference key="1">
    <citation type="submission" date="2007-11" db="EMBL/GenBank/DDBJ databases">
        <title>Complete sequence of Delftia acidovorans DSM 14801 / SPH-1.</title>
        <authorList>
            <person name="Copeland A."/>
            <person name="Lucas S."/>
            <person name="Lapidus A."/>
            <person name="Barry K."/>
            <person name="Glavina del Rio T."/>
            <person name="Dalin E."/>
            <person name="Tice H."/>
            <person name="Pitluck S."/>
            <person name="Lowry S."/>
            <person name="Clum A."/>
            <person name="Schmutz J."/>
            <person name="Larimer F."/>
            <person name="Land M."/>
            <person name="Hauser L."/>
            <person name="Kyrpides N."/>
            <person name="Kim E."/>
            <person name="Schleheck D."/>
            <person name="Richardson P."/>
        </authorList>
    </citation>
    <scope>NUCLEOTIDE SEQUENCE [LARGE SCALE GENOMIC DNA]</scope>
    <source>
        <strain>DSM 14801 / SPH-1</strain>
    </source>
</reference>
<evidence type="ECO:0000255" key="1">
    <source>
        <dbReference type="HAMAP-Rule" id="MF_01342"/>
    </source>
</evidence>
<evidence type="ECO:0000256" key="2">
    <source>
        <dbReference type="SAM" id="MobiDB-lite"/>
    </source>
</evidence>
<evidence type="ECO:0000305" key="3"/>
<organism>
    <name type="scientific">Delftia acidovorans (strain DSM 14801 / SPH-1)</name>
    <dbReference type="NCBI Taxonomy" id="398578"/>
    <lineage>
        <taxon>Bacteria</taxon>
        <taxon>Pseudomonadati</taxon>
        <taxon>Pseudomonadota</taxon>
        <taxon>Betaproteobacteria</taxon>
        <taxon>Burkholderiales</taxon>
        <taxon>Comamonadaceae</taxon>
        <taxon>Delftia</taxon>
    </lineage>
</organism>
<dbReference type="EMBL" id="CP000884">
    <property type="protein sequence ID" value="ABX33044.1"/>
    <property type="molecule type" value="Genomic_DNA"/>
</dbReference>
<dbReference type="RefSeq" id="WP_012202336.1">
    <property type="nucleotide sequence ID" value="NC_010002.1"/>
</dbReference>
<dbReference type="SMR" id="A9BPS5"/>
<dbReference type="STRING" id="398578.Daci_0398"/>
<dbReference type="GeneID" id="94689740"/>
<dbReference type="KEGG" id="dac:Daci_0398"/>
<dbReference type="eggNOG" id="COG0197">
    <property type="taxonomic scope" value="Bacteria"/>
</dbReference>
<dbReference type="HOGENOM" id="CLU_078858_2_1_4"/>
<dbReference type="Proteomes" id="UP000000784">
    <property type="component" value="Chromosome"/>
</dbReference>
<dbReference type="GO" id="GO:0022625">
    <property type="term" value="C:cytosolic large ribosomal subunit"/>
    <property type="evidence" value="ECO:0007669"/>
    <property type="project" value="TreeGrafter"/>
</dbReference>
<dbReference type="GO" id="GO:0019843">
    <property type="term" value="F:rRNA binding"/>
    <property type="evidence" value="ECO:0007669"/>
    <property type="project" value="UniProtKB-UniRule"/>
</dbReference>
<dbReference type="GO" id="GO:0003735">
    <property type="term" value="F:structural constituent of ribosome"/>
    <property type="evidence" value="ECO:0007669"/>
    <property type="project" value="InterPro"/>
</dbReference>
<dbReference type="GO" id="GO:0000049">
    <property type="term" value="F:tRNA binding"/>
    <property type="evidence" value="ECO:0007669"/>
    <property type="project" value="UniProtKB-KW"/>
</dbReference>
<dbReference type="GO" id="GO:0006412">
    <property type="term" value="P:translation"/>
    <property type="evidence" value="ECO:0007669"/>
    <property type="project" value="UniProtKB-UniRule"/>
</dbReference>
<dbReference type="CDD" id="cd01433">
    <property type="entry name" value="Ribosomal_L16_L10e"/>
    <property type="match status" value="1"/>
</dbReference>
<dbReference type="FunFam" id="3.90.1170.10:FF:000001">
    <property type="entry name" value="50S ribosomal protein L16"/>
    <property type="match status" value="1"/>
</dbReference>
<dbReference type="Gene3D" id="3.90.1170.10">
    <property type="entry name" value="Ribosomal protein L10e/L16"/>
    <property type="match status" value="1"/>
</dbReference>
<dbReference type="HAMAP" id="MF_01342">
    <property type="entry name" value="Ribosomal_uL16"/>
    <property type="match status" value="1"/>
</dbReference>
<dbReference type="InterPro" id="IPR047873">
    <property type="entry name" value="Ribosomal_uL16"/>
</dbReference>
<dbReference type="InterPro" id="IPR000114">
    <property type="entry name" value="Ribosomal_uL16_bact-type"/>
</dbReference>
<dbReference type="InterPro" id="IPR020798">
    <property type="entry name" value="Ribosomal_uL16_CS"/>
</dbReference>
<dbReference type="InterPro" id="IPR016180">
    <property type="entry name" value="Ribosomal_uL16_dom"/>
</dbReference>
<dbReference type="InterPro" id="IPR036920">
    <property type="entry name" value="Ribosomal_uL16_sf"/>
</dbReference>
<dbReference type="NCBIfam" id="TIGR01164">
    <property type="entry name" value="rplP_bact"/>
    <property type="match status" value="1"/>
</dbReference>
<dbReference type="PANTHER" id="PTHR12220">
    <property type="entry name" value="50S/60S RIBOSOMAL PROTEIN L16"/>
    <property type="match status" value="1"/>
</dbReference>
<dbReference type="PANTHER" id="PTHR12220:SF13">
    <property type="entry name" value="LARGE RIBOSOMAL SUBUNIT PROTEIN UL16M"/>
    <property type="match status" value="1"/>
</dbReference>
<dbReference type="Pfam" id="PF00252">
    <property type="entry name" value="Ribosomal_L16"/>
    <property type="match status" value="1"/>
</dbReference>
<dbReference type="PRINTS" id="PR00060">
    <property type="entry name" value="RIBOSOMALL16"/>
</dbReference>
<dbReference type="SUPFAM" id="SSF54686">
    <property type="entry name" value="Ribosomal protein L16p/L10e"/>
    <property type="match status" value="1"/>
</dbReference>
<dbReference type="PROSITE" id="PS00586">
    <property type="entry name" value="RIBOSOMAL_L16_1"/>
    <property type="match status" value="1"/>
</dbReference>
<accession>A9BPS5</accession>